<name>RR7_LATCL</name>
<sequence>MSRRGTAEEKTAKSDPIYRNRLVNMLVNRILKHGKKALAYQIIYRAMKKIQQKTETNPLSVLRQAIRGVTPDIAVKARRVGGSTHQVPIEIGSTQGKALAIRWLLAASRKRPGRDMAFKLSSELVDAAKGSGDAIRKKEETHKMAEANRAFAHFR</sequence>
<feature type="chain" id="PRO_0000124466" description="Small ribosomal subunit protein uS7c">
    <location>
        <begin position="1"/>
        <end position="155"/>
    </location>
</feature>
<geneLocation type="non-photosynthetic plastid"/>
<reference key="1">
    <citation type="submission" date="1997-10" db="EMBL/GenBank/DDBJ databases">
        <title>The rbcL gene from Lathraea (holoparasitic) is not transcribed by a plastid-encoded RNA polymerase.</title>
        <authorList>
            <person name="Lusson N."/>
            <person name="Delavault P."/>
            <person name="Thalouarn P."/>
        </authorList>
    </citation>
    <scope>NUCLEOTIDE SEQUENCE [GENOMIC DNA]</scope>
</reference>
<accession>O63057</accession>
<proteinExistence type="inferred from homology"/>
<dbReference type="EMBL" id="AF030982">
    <property type="protein sequence ID" value="AAC16520.1"/>
    <property type="molecule type" value="Genomic_DNA"/>
</dbReference>
<dbReference type="SMR" id="O63057"/>
<dbReference type="GO" id="GO:0009536">
    <property type="term" value="C:plastid"/>
    <property type="evidence" value="ECO:0007669"/>
    <property type="project" value="UniProtKB-SubCell"/>
</dbReference>
<dbReference type="GO" id="GO:0015935">
    <property type="term" value="C:small ribosomal subunit"/>
    <property type="evidence" value="ECO:0007669"/>
    <property type="project" value="InterPro"/>
</dbReference>
<dbReference type="GO" id="GO:0019843">
    <property type="term" value="F:rRNA binding"/>
    <property type="evidence" value="ECO:0007669"/>
    <property type="project" value="UniProtKB-KW"/>
</dbReference>
<dbReference type="GO" id="GO:0003735">
    <property type="term" value="F:structural constituent of ribosome"/>
    <property type="evidence" value="ECO:0007669"/>
    <property type="project" value="InterPro"/>
</dbReference>
<dbReference type="GO" id="GO:0006412">
    <property type="term" value="P:translation"/>
    <property type="evidence" value="ECO:0007669"/>
    <property type="project" value="InterPro"/>
</dbReference>
<dbReference type="CDD" id="cd14871">
    <property type="entry name" value="uS7_Chloroplast"/>
    <property type="match status" value="1"/>
</dbReference>
<dbReference type="FunFam" id="1.10.455.10:FF:000001">
    <property type="entry name" value="30S ribosomal protein S7"/>
    <property type="match status" value="1"/>
</dbReference>
<dbReference type="Gene3D" id="1.10.455.10">
    <property type="entry name" value="Ribosomal protein S7 domain"/>
    <property type="match status" value="1"/>
</dbReference>
<dbReference type="HAMAP" id="MF_00480_B">
    <property type="entry name" value="Ribosomal_uS7_B"/>
    <property type="match status" value="1"/>
</dbReference>
<dbReference type="InterPro" id="IPR000235">
    <property type="entry name" value="Ribosomal_uS7"/>
</dbReference>
<dbReference type="InterPro" id="IPR005717">
    <property type="entry name" value="Ribosomal_uS7_bac/org-type"/>
</dbReference>
<dbReference type="InterPro" id="IPR020606">
    <property type="entry name" value="Ribosomal_uS7_CS"/>
</dbReference>
<dbReference type="InterPro" id="IPR023798">
    <property type="entry name" value="Ribosomal_uS7_dom"/>
</dbReference>
<dbReference type="InterPro" id="IPR036823">
    <property type="entry name" value="Ribosomal_uS7_dom_sf"/>
</dbReference>
<dbReference type="NCBIfam" id="TIGR01029">
    <property type="entry name" value="rpsG_bact"/>
    <property type="match status" value="1"/>
</dbReference>
<dbReference type="PANTHER" id="PTHR11205">
    <property type="entry name" value="RIBOSOMAL PROTEIN S7"/>
    <property type="match status" value="1"/>
</dbReference>
<dbReference type="Pfam" id="PF00177">
    <property type="entry name" value="Ribosomal_S7"/>
    <property type="match status" value="1"/>
</dbReference>
<dbReference type="PIRSF" id="PIRSF002122">
    <property type="entry name" value="RPS7p_RPS7a_RPS5e_RPS7o"/>
    <property type="match status" value="1"/>
</dbReference>
<dbReference type="SUPFAM" id="SSF47973">
    <property type="entry name" value="Ribosomal protein S7"/>
    <property type="match status" value="1"/>
</dbReference>
<dbReference type="PROSITE" id="PS00052">
    <property type="entry name" value="RIBOSOMAL_S7"/>
    <property type="match status" value="1"/>
</dbReference>
<comment type="function">
    <text evidence="1">One of the primary rRNA binding proteins, it binds directly to 16S rRNA where it nucleates assembly of the head domain of the 30S subunit.</text>
</comment>
<comment type="subunit">
    <text>Part of the 30S ribosomal subunit.</text>
</comment>
<comment type="subcellular location">
    <subcellularLocation>
        <location>Plastid</location>
    </subcellularLocation>
</comment>
<comment type="similarity">
    <text evidence="2">Belongs to the universal ribosomal protein uS7 family.</text>
</comment>
<evidence type="ECO:0000250" key="1"/>
<evidence type="ECO:0000305" key="2"/>
<gene>
    <name type="primary">rps7</name>
</gene>
<protein>
    <recommendedName>
        <fullName evidence="2">Small ribosomal subunit protein uS7c</fullName>
    </recommendedName>
    <alternativeName>
        <fullName>30S ribosomal protein S7, plastid</fullName>
    </alternativeName>
</protein>
<organism>
    <name type="scientific">Lathraea clandestina</name>
    <name type="common">Purple toothwort</name>
    <dbReference type="NCBI Taxonomy" id="41911"/>
    <lineage>
        <taxon>Eukaryota</taxon>
        <taxon>Viridiplantae</taxon>
        <taxon>Streptophyta</taxon>
        <taxon>Embryophyta</taxon>
        <taxon>Tracheophyta</taxon>
        <taxon>Spermatophyta</taxon>
        <taxon>Magnoliopsida</taxon>
        <taxon>eudicotyledons</taxon>
        <taxon>Gunneridae</taxon>
        <taxon>Pentapetalae</taxon>
        <taxon>asterids</taxon>
        <taxon>lamiids</taxon>
        <taxon>Lamiales</taxon>
        <taxon>Orobanchaceae</taxon>
        <taxon>Rhinantheae</taxon>
        <taxon>Lathraea</taxon>
    </lineage>
</organism>
<keyword id="KW-0934">Plastid</keyword>
<keyword id="KW-0687">Ribonucleoprotein</keyword>
<keyword id="KW-0689">Ribosomal protein</keyword>
<keyword id="KW-0694">RNA-binding</keyword>
<keyword id="KW-0699">rRNA-binding</keyword>